<gene>
    <name type="primary">BMY1</name>
</gene>
<dbReference type="EC" id="3.2.1.2"/>
<dbReference type="EMBL" id="X71419">
    <property type="protein sequence ID" value="CAA50551.1"/>
    <property type="molecule type" value="mRNA"/>
</dbReference>
<dbReference type="EMBL" id="M92090">
    <property type="protein sequence ID" value="AAA33941.1"/>
    <property type="status" value="ALT_FRAME"/>
    <property type="molecule type" value="mRNA"/>
</dbReference>
<dbReference type="PIR" id="A29291">
    <property type="entry name" value="A60473"/>
</dbReference>
<dbReference type="RefSeq" id="NP_001236247.1">
    <property type="nucleotide sequence ID" value="NM_001249318.1"/>
</dbReference>
<dbReference type="PDB" id="1BFN">
    <property type="method" value="X-ray"/>
    <property type="resolution" value="2.07 A"/>
    <property type="chains" value="A=2-496"/>
</dbReference>
<dbReference type="PDB" id="1BTC">
    <property type="method" value="X-ray"/>
    <property type="resolution" value="2.00 A"/>
    <property type="chains" value="A=6-496"/>
</dbReference>
<dbReference type="PDB" id="1BYA">
    <property type="method" value="X-ray"/>
    <property type="resolution" value="2.20 A"/>
    <property type="chains" value="A=2-496"/>
</dbReference>
<dbReference type="PDB" id="1BYB">
    <property type="method" value="X-ray"/>
    <property type="resolution" value="1.90 A"/>
    <property type="chains" value="A=2-496"/>
</dbReference>
<dbReference type="PDB" id="1BYC">
    <property type="method" value="X-ray"/>
    <property type="resolution" value="2.20 A"/>
    <property type="chains" value="A=2-496"/>
</dbReference>
<dbReference type="PDB" id="1BYD">
    <property type="method" value="X-ray"/>
    <property type="resolution" value="2.20 A"/>
    <property type="chains" value="A=2-496"/>
</dbReference>
<dbReference type="PDB" id="1Q6C">
    <property type="method" value="X-ray"/>
    <property type="resolution" value="1.86 A"/>
    <property type="chains" value="A=2-496"/>
</dbReference>
<dbReference type="PDB" id="1Q6D">
    <property type="method" value="X-ray"/>
    <property type="resolution" value="2.00 A"/>
    <property type="chains" value="A=2-496"/>
</dbReference>
<dbReference type="PDB" id="1Q6E">
    <property type="method" value="X-ray"/>
    <property type="resolution" value="1.95 A"/>
    <property type="chains" value="A=2-496"/>
</dbReference>
<dbReference type="PDB" id="1Q6F">
    <property type="method" value="X-ray"/>
    <property type="resolution" value="2.10 A"/>
    <property type="chains" value="A=2-496"/>
</dbReference>
<dbReference type="PDB" id="1Q6G">
    <property type="method" value="X-ray"/>
    <property type="resolution" value="2.00 A"/>
    <property type="chains" value="A=2-496"/>
</dbReference>
<dbReference type="PDB" id="1UKO">
    <property type="method" value="X-ray"/>
    <property type="resolution" value="2.10 A"/>
    <property type="chains" value="A/B/C/D=2-496"/>
</dbReference>
<dbReference type="PDB" id="1UKP">
    <property type="method" value="X-ray"/>
    <property type="resolution" value="2.10 A"/>
    <property type="chains" value="A/B/C/D=2-496"/>
</dbReference>
<dbReference type="PDB" id="1V3H">
    <property type="method" value="X-ray"/>
    <property type="resolution" value="1.60 A"/>
    <property type="chains" value="A=2-496"/>
</dbReference>
<dbReference type="PDB" id="1V3I">
    <property type="method" value="X-ray"/>
    <property type="resolution" value="1.90 A"/>
    <property type="chains" value="A=2-496"/>
</dbReference>
<dbReference type="PDB" id="1WDP">
    <property type="method" value="X-ray"/>
    <property type="resolution" value="1.27 A"/>
    <property type="chains" value="A=2-496"/>
</dbReference>
<dbReference type="PDB" id="1WDQ">
    <property type="method" value="X-ray"/>
    <property type="resolution" value="1.28 A"/>
    <property type="chains" value="A=2-496"/>
</dbReference>
<dbReference type="PDB" id="1WDR">
    <property type="method" value="X-ray"/>
    <property type="resolution" value="1.35 A"/>
    <property type="chains" value="A=2-496"/>
</dbReference>
<dbReference type="PDB" id="1WDS">
    <property type="method" value="X-ray"/>
    <property type="resolution" value="1.64 A"/>
    <property type="chains" value="A=2-496"/>
</dbReference>
<dbReference type="PDBsum" id="1BFN"/>
<dbReference type="PDBsum" id="1BTC"/>
<dbReference type="PDBsum" id="1BYA"/>
<dbReference type="PDBsum" id="1BYB"/>
<dbReference type="PDBsum" id="1BYC"/>
<dbReference type="PDBsum" id="1BYD"/>
<dbReference type="PDBsum" id="1Q6C"/>
<dbReference type="PDBsum" id="1Q6D"/>
<dbReference type="PDBsum" id="1Q6E"/>
<dbReference type="PDBsum" id="1Q6F"/>
<dbReference type="PDBsum" id="1Q6G"/>
<dbReference type="PDBsum" id="1UKO"/>
<dbReference type="PDBsum" id="1UKP"/>
<dbReference type="PDBsum" id="1V3H"/>
<dbReference type="PDBsum" id="1V3I"/>
<dbReference type="PDBsum" id="1WDP"/>
<dbReference type="PDBsum" id="1WDQ"/>
<dbReference type="PDBsum" id="1WDR"/>
<dbReference type="PDBsum" id="1WDS"/>
<dbReference type="SMR" id="P10538"/>
<dbReference type="FunCoup" id="P10538">
    <property type="interactions" value="250"/>
</dbReference>
<dbReference type="STRING" id="3847.P10538"/>
<dbReference type="CAZy" id="GH14">
    <property type="family name" value="Glycoside Hydrolase Family 14"/>
</dbReference>
<dbReference type="iPTMnet" id="P10538"/>
<dbReference type="PaxDb" id="3847-GLYMA06G45700.1"/>
<dbReference type="GeneID" id="547931"/>
<dbReference type="KEGG" id="gmx:547931"/>
<dbReference type="eggNOG" id="ENOG502QUU5">
    <property type="taxonomic scope" value="Eukaryota"/>
</dbReference>
<dbReference type="InParanoid" id="P10538"/>
<dbReference type="OrthoDB" id="1660156at2759"/>
<dbReference type="BRENDA" id="3.2.1.2">
    <property type="organism ID" value="2483"/>
</dbReference>
<dbReference type="EvolutionaryTrace" id="P10538"/>
<dbReference type="Proteomes" id="UP000008827">
    <property type="component" value="Unplaced"/>
</dbReference>
<dbReference type="GO" id="GO:0016161">
    <property type="term" value="F:beta-amylase activity"/>
    <property type="evidence" value="ECO:0007669"/>
    <property type="project" value="UniProtKB-EC"/>
</dbReference>
<dbReference type="GO" id="GO:0000272">
    <property type="term" value="P:polysaccharide catabolic process"/>
    <property type="evidence" value="ECO:0007669"/>
    <property type="project" value="UniProtKB-KW"/>
</dbReference>
<dbReference type="FunFam" id="3.20.20.80:FF:000066">
    <property type="entry name" value="Beta-amylase"/>
    <property type="match status" value="1"/>
</dbReference>
<dbReference type="Gene3D" id="3.20.20.80">
    <property type="entry name" value="Glycosidases"/>
    <property type="match status" value="1"/>
</dbReference>
<dbReference type="InterPro" id="IPR001554">
    <property type="entry name" value="Glyco_hydro_14"/>
</dbReference>
<dbReference type="InterPro" id="IPR018238">
    <property type="entry name" value="Glyco_hydro_14_CS"/>
</dbReference>
<dbReference type="InterPro" id="IPR001371">
    <property type="entry name" value="Glyco_hydro_14B_pln"/>
</dbReference>
<dbReference type="InterPro" id="IPR017853">
    <property type="entry name" value="Glycoside_hydrolase_SF"/>
</dbReference>
<dbReference type="PANTHER" id="PTHR31352">
    <property type="entry name" value="BETA-AMYLASE 1, CHLOROPLASTIC"/>
    <property type="match status" value="1"/>
</dbReference>
<dbReference type="PANTHER" id="PTHR31352:SF40">
    <property type="entry name" value="BETA-AMYLASE 6"/>
    <property type="match status" value="1"/>
</dbReference>
<dbReference type="Pfam" id="PF01373">
    <property type="entry name" value="Glyco_hydro_14"/>
    <property type="match status" value="1"/>
</dbReference>
<dbReference type="PRINTS" id="PR00750">
    <property type="entry name" value="BETAAMYLASE"/>
</dbReference>
<dbReference type="PRINTS" id="PR00842">
    <property type="entry name" value="GLHYDLASE14B"/>
</dbReference>
<dbReference type="SUPFAM" id="SSF51445">
    <property type="entry name" value="(Trans)glycosidases"/>
    <property type="match status" value="1"/>
</dbReference>
<dbReference type="PROSITE" id="PS00506">
    <property type="entry name" value="BETA_AMYLASE_1"/>
    <property type="match status" value="1"/>
</dbReference>
<dbReference type="PROSITE" id="PS00679">
    <property type="entry name" value="BETA_AMYLASE_2"/>
    <property type="match status" value="1"/>
</dbReference>
<accession>P10538</accession>
<proteinExistence type="evidence at protein level"/>
<sequence length="496" mass="56143">MATSDSNMLLNYVPVYVMLPLGVVNVDNVFEDPDGLKEQLLQLRAAGVDGVMVDVWWGIIELKGPKQYDWRAYRSLFQLVQECGLTLQAIMSFHQCGGNVGDIVNIPIPQWVLDIGESNHDIFYTNRSGTRNKEYLTVGVDNEPIFHGRTAIEIYSDYMKSFRENMSDFLESGLIIDIEVGLGPAGELRYPSYPQSQGWEFPRIGEFQCYDKYLKADFKAAVARAGHPEWELPDDAGKYNDVPESTGFFKSNGTYVTEKGKFFLTWYSNKLLNHGDQILDEANKAFLGCKVKLAIKVSGIHWWYKVENHAAELTAGYYNLNDRDGYRPIARMLSRHHAILNFTCLEMRDSEQPSDAKSGPQELVQQVLSGGWREDIRVAGENALPRYDATAYNQIILNAKPQGVNNNGPPKLSMFGVTYLRLSDDLLQKSNFNIFKKFVLKMHADQDYCANPQKYNHAITPLKPSAPKIPIEVLLEATKPTLPFPWLPETDMKVDG</sequence>
<protein>
    <recommendedName>
        <fullName>Beta-amylase</fullName>
        <ecNumber>3.2.1.2</ecNumber>
    </recommendedName>
    <alternativeName>
        <fullName>1,4-alpha-D-glucan maltohydrolase</fullName>
    </alternativeName>
</protein>
<feature type="initiator methionine" description="Removed" evidence="3">
    <location>
        <position position="1"/>
    </location>
</feature>
<feature type="chain" id="PRO_0000153938" description="Beta-amylase">
    <location>
        <begin position="2"/>
        <end position="496"/>
    </location>
</feature>
<feature type="active site" description="Proton donor" evidence="1 2 4 5 6">
    <location>
        <position position="187"/>
    </location>
</feature>
<feature type="active site" description="Proton acceptor" evidence="2 5">
    <location>
        <position position="381"/>
    </location>
</feature>
<feature type="binding site" evidence="2">
    <location>
        <position position="54"/>
    </location>
    <ligand>
        <name>substrate</name>
    </ligand>
</feature>
<feature type="binding site" evidence="2">
    <location>
        <position position="94"/>
    </location>
    <ligand>
        <name>substrate</name>
    </ligand>
</feature>
<feature type="binding site" evidence="2">
    <location>
        <position position="102"/>
    </location>
    <ligand>
        <name>substrate</name>
    </ligand>
</feature>
<feature type="binding site" evidence="2">
    <location>
        <position position="296"/>
    </location>
    <ligand>
        <name>substrate</name>
    </ligand>
</feature>
<feature type="binding site" evidence="2">
    <location>
        <position position="301"/>
    </location>
    <ligand>
        <name>substrate</name>
    </ligand>
</feature>
<feature type="binding site" evidence="2">
    <location>
        <position position="343"/>
    </location>
    <ligand>
        <name>substrate</name>
    </ligand>
</feature>
<feature type="binding site" evidence="2">
    <location>
        <begin position="382"/>
        <end position="383"/>
    </location>
    <ligand>
        <name>substrate</name>
    </ligand>
</feature>
<feature type="binding site" evidence="2">
    <location>
        <position position="421"/>
    </location>
    <ligand>
        <name>substrate</name>
    </ligand>
</feature>
<feature type="modified residue" description="N-acetylalanine" evidence="3">
    <location>
        <position position="2"/>
    </location>
</feature>
<feature type="mutagenesis site" description="Loss of activity." evidence="6">
    <original>D</original>
    <variation>N</variation>
    <variation>E</variation>
    <location>
        <position position="102"/>
    </location>
</feature>
<feature type="mutagenesis site" description="Loss of activity." evidence="2 6">
    <original>E</original>
    <variation>Q</variation>
    <variation>D</variation>
    <location>
        <position position="187"/>
    </location>
</feature>
<feature type="mutagenesis site" description="Reduces activity 1700-fold.">
    <original>T</original>
    <variation>A</variation>
    <location>
        <position position="343"/>
    </location>
</feature>
<feature type="mutagenesis site" description="Reduces activity 360-fold.">
    <original>T</original>
    <variation>S</variation>
    <location>
        <position position="343"/>
    </location>
</feature>
<feature type="mutagenesis site" description="Reduces activity 16-fold.">
    <original>T</original>
    <variation>V</variation>
    <location>
        <position position="343"/>
    </location>
</feature>
<feature type="mutagenesis site" description="Loss of activity." evidence="2">
    <original>E</original>
    <variation>Q</variation>
    <location>
        <position position="381"/>
    </location>
</feature>
<feature type="sequence conflict" description="In Ref. 4; AA sequence." evidence="7" ref="4">
    <original>L</original>
    <variation>G</variation>
    <location>
        <position position="9"/>
    </location>
</feature>
<feature type="sequence conflict" description="In Ref. 3; AAA33941." evidence="7" ref="3">
    <original>PAGELRY</original>
    <variation>QQESSDT</variation>
    <location>
        <begin position="184"/>
        <end position="190"/>
    </location>
</feature>
<feature type="sequence conflict" description="In Ref. 3; AAA33941." evidence="7" ref="3">
    <original>R</original>
    <variation>G</variation>
    <location>
        <position position="203"/>
    </location>
</feature>
<feature type="sequence conflict" description="In Ref. 3; AAA33941." evidence="7" ref="3">
    <original>K</original>
    <variation>R</variation>
    <location>
        <position position="400"/>
    </location>
</feature>
<feature type="sequence conflict" description="In Ref. 3; AAA33941." evidence="7" ref="3">
    <original>VL</original>
    <variation>FF</variation>
    <location>
        <begin position="473"/>
        <end position="474"/>
    </location>
</feature>
<feature type="helix" evidence="11">
    <location>
        <begin position="5"/>
        <end position="9"/>
    </location>
</feature>
<feature type="strand" evidence="11">
    <location>
        <begin position="15"/>
        <end position="18"/>
    </location>
</feature>
<feature type="strand" evidence="8">
    <location>
        <begin position="23"/>
        <end position="25"/>
    </location>
</feature>
<feature type="turn" evidence="8">
    <location>
        <begin position="26"/>
        <end position="28"/>
    </location>
</feature>
<feature type="helix" evidence="11">
    <location>
        <begin position="33"/>
        <end position="45"/>
    </location>
</feature>
<feature type="strand" evidence="11">
    <location>
        <begin position="50"/>
        <end position="56"/>
    </location>
</feature>
<feature type="helix" evidence="11">
    <location>
        <begin position="57"/>
        <end position="60"/>
    </location>
</feature>
<feature type="helix" evidence="11">
    <location>
        <begin position="71"/>
        <end position="82"/>
    </location>
</feature>
<feature type="strand" evidence="11">
    <location>
        <begin position="86"/>
        <end position="92"/>
    </location>
</feature>
<feature type="strand" evidence="12">
    <location>
        <begin position="96"/>
        <end position="99"/>
    </location>
</feature>
<feature type="helix" evidence="11">
    <location>
        <begin position="110"/>
        <end position="118"/>
    </location>
</feature>
<feature type="helix" evidence="11">
    <location>
        <begin position="120"/>
        <end position="122"/>
    </location>
</feature>
<feature type="strand" evidence="11">
    <location>
        <begin position="123"/>
        <end position="125"/>
    </location>
</feature>
<feature type="strand" evidence="11">
    <location>
        <begin position="131"/>
        <end position="136"/>
    </location>
</feature>
<feature type="helix" evidence="11">
    <location>
        <begin position="138"/>
        <end position="140"/>
    </location>
</feature>
<feature type="helix" evidence="11">
    <location>
        <begin position="151"/>
        <end position="165"/>
    </location>
</feature>
<feature type="helix" evidence="11">
    <location>
        <begin position="167"/>
        <end position="171"/>
    </location>
</feature>
<feature type="strand" evidence="11">
    <location>
        <begin position="175"/>
        <end position="180"/>
    </location>
</feature>
<feature type="helix" evidence="11">
    <location>
        <begin position="184"/>
        <end position="186"/>
    </location>
</feature>
<feature type="strand" evidence="11">
    <location>
        <begin position="187"/>
        <end position="189"/>
    </location>
</feature>
<feature type="helix" evidence="11">
    <location>
        <begin position="195"/>
        <end position="197"/>
    </location>
</feature>
<feature type="strand" evidence="9">
    <location>
        <begin position="201"/>
        <end position="203"/>
    </location>
</feature>
<feature type="helix" evidence="11">
    <location>
        <begin position="212"/>
        <end position="224"/>
    </location>
</feature>
<feature type="strand" evidence="11">
    <location>
        <begin position="234"/>
        <end position="236"/>
    </location>
</feature>
<feature type="helix" evidence="11">
    <location>
        <begin position="243"/>
        <end position="245"/>
    </location>
</feature>
<feature type="turn" evidence="11">
    <location>
        <begin position="247"/>
        <end position="249"/>
    </location>
</feature>
<feature type="helix" evidence="11">
    <location>
        <begin position="254"/>
        <end position="256"/>
    </location>
</feature>
<feature type="helix" evidence="11">
    <location>
        <begin position="258"/>
        <end position="285"/>
    </location>
</feature>
<feature type="turn" evidence="11">
    <location>
        <begin position="286"/>
        <end position="288"/>
    </location>
</feature>
<feature type="strand" evidence="11">
    <location>
        <begin position="292"/>
        <end position="296"/>
    </location>
</feature>
<feature type="turn" evidence="11">
    <location>
        <begin position="302"/>
        <end position="305"/>
    </location>
</feature>
<feature type="helix" evidence="11">
    <location>
        <begin position="310"/>
        <end position="315"/>
    </location>
</feature>
<feature type="helix" evidence="11">
    <location>
        <begin position="327"/>
        <end position="334"/>
    </location>
</feature>
<feature type="turn" evidence="11">
    <location>
        <begin position="335"/>
        <end position="337"/>
    </location>
</feature>
<feature type="strand" evidence="11">
    <location>
        <begin position="339"/>
        <end position="342"/>
    </location>
</feature>
<feature type="helix" evidence="11">
    <location>
        <begin position="349"/>
        <end position="351"/>
    </location>
</feature>
<feature type="helix" evidence="11">
    <location>
        <begin position="354"/>
        <end position="356"/>
    </location>
</feature>
<feature type="helix" evidence="11">
    <location>
        <begin position="360"/>
        <end position="373"/>
    </location>
</feature>
<feature type="strand" evidence="11">
    <location>
        <begin position="378"/>
        <end position="381"/>
    </location>
</feature>
<feature type="helix" evidence="11">
    <location>
        <begin position="389"/>
        <end position="399"/>
    </location>
</feature>
<feature type="strand" evidence="10">
    <location>
        <begin position="406"/>
        <end position="409"/>
    </location>
</feature>
<feature type="strand" evidence="11">
    <location>
        <begin position="415"/>
        <end position="420"/>
    </location>
</feature>
<feature type="helix" evidence="11">
    <location>
        <begin position="424"/>
        <end position="427"/>
    </location>
</feature>
<feature type="helix" evidence="11">
    <location>
        <begin position="429"/>
        <end position="442"/>
    </location>
</feature>
<feature type="turn" evidence="11">
    <location>
        <begin position="443"/>
        <end position="445"/>
    </location>
</feature>
<feature type="helix" evidence="11">
    <location>
        <begin position="452"/>
        <end position="455"/>
    </location>
</feature>
<feature type="helix" evidence="11">
    <location>
        <begin position="471"/>
        <end position="476"/>
    </location>
</feature>
<organism>
    <name type="scientific">Glycine max</name>
    <name type="common">Soybean</name>
    <name type="synonym">Glycine hispida</name>
    <dbReference type="NCBI Taxonomy" id="3847"/>
    <lineage>
        <taxon>Eukaryota</taxon>
        <taxon>Viridiplantae</taxon>
        <taxon>Streptophyta</taxon>
        <taxon>Embryophyta</taxon>
        <taxon>Tracheophyta</taxon>
        <taxon>Spermatophyta</taxon>
        <taxon>Magnoliopsida</taxon>
        <taxon>eudicotyledons</taxon>
        <taxon>Gunneridae</taxon>
        <taxon>Pentapetalae</taxon>
        <taxon>rosids</taxon>
        <taxon>fabids</taxon>
        <taxon>Fabales</taxon>
        <taxon>Fabaceae</taxon>
        <taxon>Papilionoideae</taxon>
        <taxon>50 kb inversion clade</taxon>
        <taxon>NPAAA clade</taxon>
        <taxon>indigoferoid/millettioid clade</taxon>
        <taxon>Phaseoleae</taxon>
        <taxon>Glycine</taxon>
        <taxon>Glycine subgen. Soja</taxon>
    </lineage>
</organism>
<reference key="1">
    <citation type="journal article" date="1993" name="Eur. J. Biochem.">
        <title>Expression and mutation of soybean beta-amylase in Escherichia coli.</title>
        <authorList>
            <person name="Totsuka A."/>
            <person name="Fukazawa C."/>
        </authorList>
    </citation>
    <scope>NUCLEOTIDE SEQUENCE [MRNA]</scope>
</reference>
<reference key="2">
    <citation type="journal article" date="1988" name="Seikagaku">
        <title>Primary structure and function of beta-amylase.</title>
        <authorList>
            <person name="Mikami B."/>
            <person name="Morita Y."/>
            <person name="Fukazawa C."/>
        </authorList>
    </citation>
    <scope>NUCLEOTIDE SEQUENCE [MRNA]</scope>
</reference>
<reference key="3">
    <citation type="submission" date="1992-08" db="EMBL/GenBank/DDBJ databases">
        <title>Nucleotide and deduced protein sequence of beta-amylase.</title>
        <authorList>
            <person name="Ehrlich K.C."/>
            <person name="Montalbano B.G."/>
        </authorList>
    </citation>
    <scope>NUCLEOTIDE SEQUENCE [MRNA]</scope>
</reference>
<reference key="4">
    <citation type="journal article" date="1986" name="J. Biochem.">
        <title>N-terminal sequence of soybean beta-amylase.</title>
        <authorList>
            <person name="Mikami B."/>
            <person name="Nomura K."/>
            <person name="Morita Y."/>
        </authorList>
    </citation>
    <scope>PROTEIN SEQUENCE OF 2-10</scope>
    <scope>ACETYLATION AT ALA-2</scope>
</reference>
<reference key="5">
    <citation type="journal article" date="1989" name="J. Biochem.">
        <title>Identification of glutamic acid 186 affinity-labeled by 2,3-epoxypropyl alpha-D-glucopyranoside in soybean beta-amylase.</title>
        <authorList>
            <person name="Nitta Y."/>
            <person name="Isoda Y."/>
            <person name="Toda H."/>
            <person name="Sakiyama F."/>
        </authorList>
    </citation>
    <scope>ACTIVE SITE GLU-187</scope>
</reference>
<reference key="6">
    <citation type="journal article" date="1994" name="Eur. J. Biochem.">
        <title>Residues essential for catalytic activity of soybean beta-amylase.</title>
        <authorList>
            <person name="Totsuka A."/>
            <person name="Nong V.H."/>
            <person name="Kadokawa H."/>
            <person name="Kim C.-S."/>
            <person name="Itoh Y."/>
            <person name="Fukazawa C."/>
        </authorList>
    </citation>
    <scope>ACTIVE SITE</scope>
    <scope>MUTAGENESIS OF ASP-102 AND GLU-187</scope>
</reference>
<reference key="7">
    <citation type="journal article" date="1992" name="J. Biochem.">
        <title>Three-dimensional structure of soybean beta-amylase determined at 3.0-A resolution: preliminary chain tracing of the complex with alpha-cyclodextrin.</title>
        <authorList>
            <person name="Mikami B."/>
            <person name="Sato M."/>
            <person name="Shibata T."/>
            <person name="Hirose M."/>
            <person name="Aibara S."/>
            <person name="Katsube Y."/>
            <person name="Morita Y."/>
        </authorList>
    </citation>
    <scope>X-RAY CRYSTALLOGRAPHY (3.0 ANGSTROMS)</scope>
</reference>
<reference key="8">
    <citation type="journal article" date="1993" name="Biochemistry">
        <title>The 2.0-A resolution structure of soybean beta-amylase complexed with alpha-cyclodextrin.</title>
        <authorList>
            <person name="Mikami B."/>
            <person name="Hehre E.J."/>
            <person name="Sato M."/>
            <person name="Katsube Y."/>
            <person name="Hirose M."/>
            <person name="Morita Y."/>
            <person name="Sacchettini J.C."/>
        </authorList>
    </citation>
    <scope>X-RAY CRYSTALLOGRAPHY (2.0 ANGSTROMS)</scope>
</reference>
<reference key="9">
    <citation type="journal article" date="1994" name="Biochemistry">
        <title>Crystal structures of soybean beta-amylase reacted with beta-maltose and maltal: active site components and their apparent roles in catalysis.</title>
        <authorList>
            <person name="Mikami B."/>
            <person name="Degano M."/>
            <person name="Hehre E.J."/>
            <person name="Sacchettini J.C."/>
        </authorList>
    </citation>
    <scope>X-RAY CRYSTALLOGRAPHY (1.9 ANGSTROMS)</scope>
    <scope>ACTIVE SITE</scope>
</reference>
<reference key="10">
    <citation type="journal article" date="1998" name="J. Biol. Chem.">
        <title>Crystal structure of recombinant soybean beta-amylase complexed with beta-cyclodextrin.</title>
        <authorList>
            <person name="Adachi M."/>
            <person name="Mikami B."/>
            <person name="Katsube T."/>
            <person name="Utsumi S."/>
        </authorList>
    </citation>
    <scope>X-RAY CRYSTALLOGRAPHY (2.07 ANGSTROMS)</scope>
</reference>
<reference key="11">
    <citation type="journal article" date="2004" name="J. Mol. Biol.">
        <title>The roles of Glu186 and Glu380 in the catalytic reaction of soybean beta-amylase.</title>
        <authorList>
            <person name="Kang Y.N."/>
            <person name="Adachi M."/>
            <person name="Utsumi S."/>
            <person name="Mikami B."/>
        </authorList>
    </citation>
    <scope>X-RAY CRYSTALLOGRAPHY (1.6 ANGSTROMS) OF MUTANTS GLN-187 AND GLN-381 IN COMPLEXES WITH SUBSTRATE ANALOGS</scope>
    <scope>ACTIVE SITE</scope>
    <scope>CATALYTIC ACTIVITY</scope>
    <scope>MUTAGENESIS OF GLU-187 AND GLU-381</scope>
    <scope>SUBSTRATE-BINDING</scope>
</reference>
<reference key="12">
    <citation type="journal article" date="2005" name="Biochemistry">
        <title>Structural analysis of threonine 342 mutants of soybean beta-amylase: role of a conformational change of the inner loop in the catalytic mechanism.</title>
        <authorList>
            <person name="Kang Y.N."/>
            <person name="Tanabe A."/>
            <person name="Adachi M."/>
            <person name="Utsumi S."/>
            <person name="Mikami B."/>
        </authorList>
    </citation>
    <scope>X-RAY CRYSTALLOGRAPHY (1.27 ANGSTROMS) OF MUTANTS ALA/SER/VAL-343 IN COMPLEXES WITH MALTOSE</scope>
</reference>
<evidence type="ECO:0000255" key="1">
    <source>
        <dbReference type="PROSITE-ProRule" id="PRU10050"/>
    </source>
</evidence>
<evidence type="ECO:0000269" key="2">
    <source>
    </source>
</evidence>
<evidence type="ECO:0000269" key="3">
    <source>
    </source>
</evidence>
<evidence type="ECO:0000269" key="4">
    <source>
    </source>
</evidence>
<evidence type="ECO:0000269" key="5">
    <source>
    </source>
</evidence>
<evidence type="ECO:0000269" key="6">
    <source>
    </source>
</evidence>
<evidence type="ECO:0000305" key="7"/>
<evidence type="ECO:0007829" key="8">
    <source>
        <dbReference type="PDB" id="1BYA"/>
    </source>
</evidence>
<evidence type="ECO:0007829" key="9">
    <source>
        <dbReference type="PDB" id="1BYB"/>
    </source>
</evidence>
<evidence type="ECO:0007829" key="10">
    <source>
        <dbReference type="PDB" id="1V3I"/>
    </source>
</evidence>
<evidence type="ECO:0007829" key="11">
    <source>
        <dbReference type="PDB" id="1WDP"/>
    </source>
</evidence>
<evidence type="ECO:0007829" key="12">
    <source>
        <dbReference type="PDB" id="1WDQ"/>
    </source>
</evidence>
<name>AMYB_SOYBN</name>
<keyword id="KW-0002">3D-structure</keyword>
<keyword id="KW-0007">Acetylation</keyword>
<keyword id="KW-0119">Carbohydrate metabolism</keyword>
<keyword id="KW-0903">Direct protein sequencing</keyword>
<keyword id="KW-0326">Glycosidase</keyword>
<keyword id="KW-0378">Hydrolase</keyword>
<keyword id="KW-0624">Polysaccharide degradation</keyword>
<keyword id="KW-1185">Reference proteome</keyword>
<comment type="catalytic activity">
    <reaction evidence="2">
        <text>Hydrolysis of (1-&gt;4)-alpha-D-glucosidic linkages in polysaccharides so as to remove successive maltose units from the non-reducing ends of the chains.</text>
        <dbReference type="EC" id="3.2.1.2"/>
    </reaction>
</comment>
<comment type="subunit">
    <text>Monomer.</text>
</comment>
<comment type="similarity">
    <text evidence="7">Belongs to the glycosyl hydrolase 14 family.</text>
</comment>
<comment type="sequence caution" evidence="7">
    <conflict type="frameshift">
        <sequence resource="EMBL-CDS" id="AAA33941"/>
    </conflict>
</comment>